<accession>B1W401</accession>
<name>RS3_STRGG</name>
<organism>
    <name type="scientific">Streptomyces griseus subsp. griseus (strain JCM 4626 / CBS 651.72 / NBRC 13350 / KCC S-0626 / ISP 5235)</name>
    <dbReference type="NCBI Taxonomy" id="455632"/>
    <lineage>
        <taxon>Bacteria</taxon>
        <taxon>Bacillati</taxon>
        <taxon>Actinomycetota</taxon>
        <taxon>Actinomycetes</taxon>
        <taxon>Kitasatosporales</taxon>
        <taxon>Streptomycetaceae</taxon>
        <taxon>Streptomyces</taxon>
    </lineage>
</organism>
<feature type="chain" id="PRO_1000141020" description="Small ribosomal subunit protein uS3">
    <location>
        <begin position="1"/>
        <end position="276"/>
    </location>
</feature>
<feature type="domain" description="KH type-2" evidence="1">
    <location>
        <begin position="38"/>
        <end position="106"/>
    </location>
</feature>
<feature type="region of interest" description="Disordered" evidence="2">
    <location>
        <begin position="216"/>
        <end position="276"/>
    </location>
</feature>
<feature type="compositionally biased region" description="Low complexity" evidence="2">
    <location>
        <begin position="216"/>
        <end position="228"/>
    </location>
</feature>
<feature type="compositionally biased region" description="Basic and acidic residues" evidence="2">
    <location>
        <begin position="229"/>
        <end position="245"/>
    </location>
</feature>
<feature type="compositionally biased region" description="Low complexity" evidence="2">
    <location>
        <begin position="254"/>
        <end position="269"/>
    </location>
</feature>
<dbReference type="EMBL" id="AP009493">
    <property type="protein sequence ID" value="BAG19657.1"/>
    <property type="molecule type" value="Genomic_DNA"/>
</dbReference>
<dbReference type="RefSeq" id="WP_003966954.1">
    <property type="nucleotide sequence ID" value="NC_010572.1"/>
</dbReference>
<dbReference type="SMR" id="B1W401"/>
<dbReference type="GeneID" id="97760376"/>
<dbReference type="KEGG" id="sgr:SGR_2828"/>
<dbReference type="eggNOG" id="COG0092">
    <property type="taxonomic scope" value="Bacteria"/>
</dbReference>
<dbReference type="HOGENOM" id="CLU_058591_0_0_11"/>
<dbReference type="Proteomes" id="UP000001685">
    <property type="component" value="Chromosome"/>
</dbReference>
<dbReference type="GO" id="GO:0022627">
    <property type="term" value="C:cytosolic small ribosomal subunit"/>
    <property type="evidence" value="ECO:0007669"/>
    <property type="project" value="TreeGrafter"/>
</dbReference>
<dbReference type="GO" id="GO:0003729">
    <property type="term" value="F:mRNA binding"/>
    <property type="evidence" value="ECO:0007669"/>
    <property type="project" value="UniProtKB-UniRule"/>
</dbReference>
<dbReference type="GO" id="GO:0019843">
    <property type="term" value="F:rRNA binding"/>
    <property type="evidence" value="ECO:0007669"/>
    <property type="project" value="UniProtKB-UniRule"/>
</dbReference>
<dbReference type="GO" id="GO:0003735">
    <property type="term" value="F:structural constituent of ribosome"/>
    <property type="evidence" value="ECO:0007669"/>
    <property type="project" value="InterPro"/>
</dbReference>
<dbReference type="GO" id="GO:0006412">
    <property type="term" value="P:translation"/>
    <property type="evidence" value="ECO:0007669"/>
    <property type="project" value="UniProtKB-UniRule"/>
</dbReference>
<dbReference type="CDD" id="cd02412">
    <property type="entry name" value="KH-II_30S_S3"/>
    <property type="match status" value="1"/>
</dbReference>
<dbReference type="FunFam" id="3.30.1140.32:FF:000002">
    <property type="entry name" value="30S ribosomal protein S3"/>
    <property type="match status" value="1"/>
</dbReference>
<dbReference type="FunFam" id="3.30.300.20:FF:000001">
    <property type="entry name" value="30S ribosomal protein S3"/>
    <property type="match status" value="1"/>
</dbReference>
<dbReference type="Gene3D" id="3.30.300.20">
    <property type="match status" value="1"/>
</dbReference>
<dbReference type="Gene3D" id="3.30.1140.32">
    <property type="entry name" value="Ribosomal protein S3, C-terminal domain"/>
    <property type="match status" value="1"/>
</dbReference>
<dbReference type="HAMAP" id="MF_01309_B">
    <property type="entry name" value="Ribosomal_uS3_B"/>
    <property type="match status" value="1"/>
</dbReference>
<dbReference type="InterPro" id="IPR004087">
    <property type="entry name" value="KH_dom"/>
</dbReference>
<dbReference type="InterPro" id="IPR015946">
    <property type="entry name" value="KH_dom-like_a/b"/>
</dbReference>
<dbReference type="InterPro" id="IPR004044">
    <property type="entry name" value="KH_dom_type_2"/>
</dbReference>
<dbReference type="InterPro" id="IPR009019">
    <property type="entry name" value="KH_sf_prok-type"/>
</dbReference>
<dbReference type="InterPro" id="IPR036419">
    <property type="entry name" value="Ribosomal_S3_C_sf"/>
</dbReference>
<dbReference type="InterPro" id="IPR005704">
    <property type="entry name" value="Ribosomal_uS3_bac-typ"/>
</dbReference>
<dbReference type="InterPro" id="IPR001351">
    <property type="entry name" value="Ribosomal_uS3_C"/>
</dbReference>
<dbReference type="InterPro" id="IPR018280">
    <property type="entry name" value="Ribosomal_uS3_CS"/>
</dbReference>
<dbReference type="NCBIfam" id="TIGR01009">
    <property type="entry name" value="rpsC_bact"/>
    <property type="match status" value="1"/>
</dbReference>
<dbReference type="PANTHER" id="PTHR11760">
    <property type="entry name" value="30S/40S RIBOSOMAL PROTEIN S3"/>
    <property type="match status" value="1"/>
</dbReference>
<dbReference type="PANTHER" id="PTHR11760:SF19">
    <property type="entry name" value="SMALL RIBOSOMAL SUBUNIT PROTEIN US3C"/>
    <property type="match status" value="1"/>
</dbReference>
<dbReference type="Pfam" id="PF07650">
    <property type="entry name" value="KH_2"/>
    <property type="match status" value="1"/>
</dbReference>
<dbReference type="Pfam" id="PF00189">
    <property type="entry name" value="Ribosomal_S3_C"/>
    <property type="match status" value="1"/>
</dbReference>
<dbReference type="SMART" id="SM00322">
    <property type="entry name" value="KH"/>
    <property type="match status" value="1"/>
</dbReference>
<dbReference type="SUPFAM" id="SSF54814">
    <property type="entry name" value="Prokaryotic type KH domain (KH-domain type II)"/>
    <property type="match status" value="1"/>
</dbReference>
<dbReference type="SUPFAM" id="SSF54821">
    <property type="entry name" value="Ribosomal protein S3 C-terminal domain"/>
    <property type="match status" value="1"/>
</dbReference>
<dbReference type="PROSITE" id="PS50823">
    <property type="entry name" value="KH_TYPE_2"/>
    <property type="match status" value="1"/>
</dbReference>
<dbReference type="PROSITE" id="PS00548">
    <property type="entry name" value="RIBOSOMAL_S3"/>
    <property type="match status" value="1"/>
</dbReference>
<protein>
    <recommendedName>
        <fullName evidence="1">Small ribosomal subunit protein uS3</fullName>
    </recommendedName>
    <alternativeName>
        <fullName evidence="3">30S ribosomal protein S3</fullName>
    </alternativeName>
</protein>
<reference key="1">
    <citation type="journal article" date="2008" name="J. Bacteriol.">
        <title>Genome sequence of the streptomycin-producing microorganism Streptomyces griseus IFO 13350.</title>
        <authorList>
            <person name="Ohnishi Y."/>
            <person name="Ishikawa J."/>
            <person name="Hara H."/>
            <person name="Suzuki H."/>
            <person name="Ikenoya M."/>
            <person name="Ikeda H."/>
            <person name="Yamashita A."/>
            <person name="Hattori M."/>
            <person name="Horinouchi S."/>
        </authorList>
    </citation>
    <scope>NUCLEOTIDE SEQUENCE [LARGE SCALE GENOMIC DNA]</scope>
    <source>
        <strain>JCM 4626 / CBS 651.72 / NBRC 13350 / KCC S-0626 / ISP 5235</strain>
    </source>
</reference>
<sequence length="276" mass="30163">MGQKVNPHGFRLGITTDFKSRWYADKLYKDYVKEDVAIRRMMTKGMERAGISKVEIERTRDRVRVDIHTARPGIVIGRRGAEADRIRGELEKLTGKQVQLNILEVKNPEVDAQLVAQAVAEQLSSRVSFRRAMRKSMQSSMKAGAKGIKIQCGGRLGGAEMSRSEFYREGRVPLHTLRANVDYGFFEAKTTFGRIGVKVWIYKGDVKNIAEVRAENAAARAGNRPARGGADRPAGRGGRGGERGGRGRKPQQSPAAEAPKADAAAAPAAESTGTEA</sequence>
<proteinExistence type="inferred from homology"/>
<evidence type="ECO:0000255" key="1">
    <source>
        <dbReference type="HAMAP-Rule" id="MF_01309"/>
    </source>
</evidence>
<evidence type="ECO:0000256" key="2">
    <source>
        <dbReference type="SAM" id="MobiDB-lite"/>
    </source>
</evidence>
<evidence type="ECO:0000305" key="3"/>
<gene>
    <name evidence="1" type="primary">rpsC</name>
    <name type="ordered locus">SGR_2828</name>
</gene>
<comment type="function">
    <text evidence="1">Binds the lower part of the 30S subunit head. Binds mRNA in the 70S ribosome, positioning it for translation.</text>
</comment>
<comment type="subunit">
    <text evidence="1">Part of the 30S ribosomal subunit. Forms a tight complex with proteins S10 and S14.</text>
</comment>
<comment type="similarity">
    <text evidence="1">Belongs to the universal ribosomal protein uS3 family.</text>
</comment>
<keyword id="KW-0687">Ribonucleoprotein</keyword>
<keyword id="KW-0689">Ribosomal protein</keyword>
<keyword id="KW-0694">RNA-binding</keyword>
<keyword id="KW-0699">rRNA-binding</keyword>